<feature type="chain" id="PRO_0000079807" description="Carbon monoxide dehydrogenase/acetyl-CoA synthase subunit alpha">
    <location>
        <begin position="1"/>
        <end position="729"/>
    </location>
</feature>
<feature type="binding site">
    <location>
        <position position="506"/>
    </location>
    <ligand>
        <name>[4Fe-4S] cluster</name>
        <dbReference type="ChEBI" id="CHEBI:49883"/>
    </ligand>
</feature>
<feature type="binding site">
    <location>
        <position position="509"/>
    </location>
    <ligand>
        <name>[4Fe-4S] cluster</name>
        <dbReference type="ChEBI" id="CHEBI:49883"/>
    </ligand>
</feature>
<feature type="binding site">
    <location>
        <position position="509"/>
    </location>
    <ligand>
        <name>Ni(2+)</name>
        <dbReference type="ChEBI" id="CHEBI:49786"/>
        <label>1</label>
    </ligand>
</feature>
<feature type="binding site">
    <location>
        <position position="518"/>
    </location>
    <ligand>
        <name>[4Fe-4S] cluster</name>
        <dbReference type="ChEBI" id="CHEBI:49883"/>
    </ligand>
</feature>
<feature type="binding site">
    <location>
        <position position="528"/>
    </location>
    <ligand>
        <name>[4Fe-4S] cluster</name>
        <dbReference type="ChEBI" id="CHEBI:49883"/>
    </ligand>
</feature>
<feature type="binding site">
    <location>
        <position position="595"/>
    </location>
    <ligand>
        <name>Ni(2+)</name>
        <dbReference type="ChEBI" id="CHEBI:49786"/>
        <label>1</label>
    </ligand>
</feature>
<feature type="binding site">
    <location>
        <position position="595"/>
    </location>
    <ligand>
        <name>Ni(2+)</name>
        <dbReference type="ChEBI" id="CHEBI:49786"/>
        <label>2</label>
    </ligand>
</feature>
<feature type="binding site">
    <location>
        <position position="596"/>
    </location>
    <ligand>
        <name>Ni(2+)</name>
        <dbReference type="ChEBI" id="CHEBI:49786"/>
        <label>1</label>
    </ligand>
</feature>
<feature type="binding site">
    <location>
        <position position="596"/>
    </location>
    <ligand>
        <name>Ni(2+)</name>
        <dbReference type="ChEBI" id="CHEBI:49786"/>
        <label>2</label>
    </ligand>
</feature>
<feature type="binding site">
    <location>
        <position position="597"/>
    </location>
    <ligand>
        <name>Ni(2+)</name>
        <dbReference type="ChEBI" id="CHEBI:49786"/>
        <label>1</label>
    </ligand>
</feature>
<feature type="binding site">
    <location>
        <position position="597"/>
    </location>
    <ligand>
        <name>Ni(2+)</name>
        <dbReference type="ChEBI" id="CHEBI:49786"/>
        <label>2</label>
    </ligand>
</feature>
<feature type="helix" evidence="2">
    <location>
        <begin position="4"/>
        <end position="8"/>
    </location>
</feature>
<feature type="helix" evidence="2">
    <location>
        <begin position="19"/>
        <end position="47"/>
    </location>
</feature>
<feature type="strand" evidence="2">
    <location>
        <begin position="59"/>
        <end position="62"/>
    </location>
</feature>
<feature type="helix" evidence="2">
    <location>
        <begin position="63"/>
        <end position="68"/>
    </location>
</feature>
<feature type="helix" evidence="2">
    <location>
        <begin position="76"/>
        <end position="78"/>
    </location>
</feature>
<feature type="helix" evidence="2">
    <location>
        <begin position="79"/>
        <end position="89"/>
    </location>
</feature>
<feature type="helix" evidence="2">
    <location>
        <begin position="96"/>
        <end position="117"/>
    </location>
</feature>
<feature type="helix" evidence="2">
    <location>
        <begin position="118"/>
        <end position="120"/>
    </location>
</feature>
<feature type="helix" evidence="2">
    <location>
        <begin position="138"/>
        <end position="143"/>
    </location>
</feature>
<feature type="helix" evidence="2">
    <location>
        <begin position="145"/>
        <end position="148"/>
    </location>
</feature>
<feature type="turn" evidence="2">
    <location>
        <begin position="149"/>
        <end position="151"/>
    </location>
</feature>
<feature type="strand" evidence="2">
    <location>
        <begin position="156"/>
        <end position="161"/>
    </location>
</feature>
<feature type="helix" evidence="2">
    <location>
        <begin position="166"/>
        <end position="178"/>
    </location>
</feature>
<feature type="strand" evidence="2">
    <location>
        <begin position="182"/>
        <end position="186"/>
    </location>
</feature>
<feature type="helix" evidence="2">
    <location>
        <begin position="188"/>
        <end position="195"/>
    </location>
</feature>
<feature type="helix" evidence="2">
    <location>
        <begin position="202"/>
        <end position="204"/>
    </location>
</feature>
<feature type="strand" evidence="2">
    <location>
        <begin position="206"/>
        <end position="211"/>
    </location>
</feature>
<feature type="helix" evidence="2">
    <location>
        <begin position="212"/>
        <end position="215"/>
    </location>
</feature>
<feature type="helix" evidence="2">
    <location>
        <begin position="216"/>
        <end position="227"/>
    </location>
</feature>
<feature type="turn" evidence="2">
    <location>
        <begin position="228"/>
        <end position="230"/>
    </location>
</feature>
<feature type="helix" evidence="2">
    <location>
        <begin position="237"/>
        <end position="247"/>
    </location>
</feature>
<feature type="strand" evidence="2">
    <location>
        <begin position="250"/>
        <end position="257"/>
    </location>
</feature>
<feature type="helix" evidence="2">
    <location>
        <begin position="260"/>
        <end position="272"/>
    </location>
</feature>
<feature type="strand" evidence="2">
    <location>
        <begin position="276"/>
        <end position="280"/>
    </location>
</feature>
<feature type="helix" evidence="2">
    <location>
        <begin position="284"/>
        <end position="286"/>
    </location>
</feature>
<feature type="turn" evidence="2">
    <location>
        <begin position="289"/>
        <end position="291"/>
    </location>
</feature>
<feature type="strand" evidence="2">
    <location>
        <begin position="292"/>
        <end position="294"/>
    </location>
</feature>
<feature type="helix" evidence="2">
    <location>
        <begin position="298"/>
        <end position="309"/>
    </location>
</feature>
<feature type="helix" evidence="2">
    <location>
        <begin position="326"/>
        <end position="330"/>
    </location>
</feature>
<feature type="helix" evidence="2">
    <location>
        <begin position="335"/>
        <end position="337"/>
    </location>
</feature>
<feature type="strand" evidence="2">
    <location>
        <begin position="338"/>
        <end position="343"/>
    </location>
</feature>
<feature type="turn" evidence="2">
    <location>
        <begin position="344"/>
        <end position="346"/>
    </location>
</feature>
<feature type="strand" evidence="2">
    <location>
        <begin position="349"/>
        <end position="355"/>
    </location>
</feature>
<feature type="helix" evidence="2">
    <location>
        <begin position="358"/>
        <end position="360"/>
    </location>
</feature>
<feature type="strand" evidence="2">
    <location>
        <begin position="366"/>
        <end position="370"/>
    </location>
</feature>
<feature type="helix" evidence="2">
    <location>
        <begin position="373"/>
        <end position="375"/>
    </location>
</feature>
<feature type="strand" evidence="3">
    <location>
        <begin position="380"/>
        <end position="382"/>
    </location>
</feature>
<feature type="strand" evidence="2">
    <location>
        <begin position="384"/>
        <end position="391"/>
    </location>
</feature>
<feature type="helix" evidence="2">
    <location>
        <begin position="397"/>
        <end position="399"/>
    </location>
</feature>
<feature type="helix" evidence="2">
    <location>
        <begin position="400"/>
        <end position="412"/>
    </location>
</feature>
<feature type="strand" evidence="2">
    <location>
        <begin position="417"/>
        <end position="422"/>
    </location>
</feature>
<feature type="strand" evidence="2">
    <location>
        <begin position="425"/>
        <end position="431"/>
    </location>
</feature>
<feature type="helix" evidence="2">
    <location>
        <begin position="432"/>
        <end position="437"/>
    </location>
</feature>
<feature type="helix" evidence="2">
    <location>
        <begin position="442"/>
        <end position="455"/>
    </location>
</feature>
<feature type="turn" evidence="4">
    <location>
        <begin position="457"/>
        <end position="459"/>
    </location>
</feature>
<feature type="strand" evidence="2">
    <location>
        <begin position="460"/>
        <end position="468"/>
    </location>
</feature>
<feature type="helix" evidence="2">
    <location>
        <begin position="471"/>
        <end position="493"/>
    </location>
</feature>
<feature type="turn" evidence="2">
    <location>
        <begin position="497"/>
        <end position="499"/>
    </location>
</feature>
<feature type="strand" evidence="2">
    <location>
        <begin position="501"/>
        <end position="506"/>
    </location>
</feature>
<feature type="helix" evidence="2">
    <location>
        <begin position="508"/>
        <end position="511"/>
    </location>
</feature>
<feature type="strand" evidence="2">
    <location>
        <begin position="518"/>
        <end position="521"/>
    </location>
</feature>
<feature type="helix" evidence="2">
    <location>
        <begin position="533"/>
        <end position="542"/>
    </location>
</feature>
<feature type="strand" evidence="2">
    <location>
        <begin position="550"/>
        <end position="552"/>
    </location>
</feature>
<feature type="strand" evidence="2">
    <location>
        <begin position="555"/>
        <end position="558"/>
    </location>
</feature>
<feature type="turn" evidence="2">
    <location>
        <begin position="559"/>
        <end position="562"/>
    </location>
</feature>
<feature type="helix" evidence="2">
    <location>
        <begin position="565"/>
        <end position="574"/>
    </location>
</feature>
<feature type="turn" evidence="2">
    <location>
        <begin position="575"/>
        <end position="577"/>
    </location>
</feature>
<feature type="strand" evidence="2">
    <location>
        <begin position="587"/>
        <end position="590"/>
    </location>
</feature>
<feature type="strand" evidence="2">
    <location>
        <begin position="599"/>
        <end position="605"/>
    </location>
</feature>
<feature type="helix" evidence="2">
    <location>
        <begin position="606"/>
        <end position="608"/>
    </location>
</feature>
<feature type="strand" evidence="2">
    <location>
        <begin position="610"/>
        <end position="615"/>
    </location>
</feature>
<feature type="helix" evidence="2">
    <location>
        <begin position="628"/>
        <end position="635"/>
    </location>
</feature>
<feature type="strand" evidence="2">
    <location>
        <begin position="644"/>
        <end position="647"/>
    </location>
</feature>
<feature type="helix" evidence="2">
    <location>
        <begin position="649"/>
        <end position="653"/>
    </location>
</feature>
<feature type="turn" evidence="2">
    <location>
        <begin position="655"/>
        <end position="658"/>
    </location>
</feature>
<feature type="helix" evidence="2">
    <location>
        <begin position="659"/>
        <end position="661"/>
    </location>
</feature>
<feature type="helix" evidence="2">
    <location>
        <begin position="663"/>
        <end position="666"/>
    </location>
</feature>
<feature type="strand" evidence="2">
    <location>
        <begin position="667"/>
        <end position="669"/>
    </location>
</feature>
<feature type="helix" evidence="2">
    <location>
        <begin position="672"/>
        <end position="688"/>
    </location>
</feature>
<feature type="helix" evidence="2">
    <location>
        <begin position="695"/>
        <end position="698"/>
    </location>
</feature>
<feature type="turn" evidence="2">
    <location>
        <begin position="702"/>
        <end position="704"/>
    </location>
</feature>
<feature type="helix" evidence="2">
    <location>
        <begin position="708"/>
        <end position="718"/>
    </location>
</feature>
<feature type="helix" evidence="2">
    <location>
        <begin position="721"/>
        <end position="724"/>
    </location>
</feature>
<evidence type="ECO:0000269" key="1">
    <source>
    </source>
</evidence>
<evidence type="ECO:0007829" key="2">
    <source>
        <dbReference type="PDB" id="1OAO"/>
    </source>
</evidence>
<evidence type="ECO:0007829" key="3">
    <source>
        <dbReference type="PDB" id="3I01"/>
    </source>
</evidence>
<evidence type="ECO:0007829" key="4">
    <source>
        <dbReference type="PDB" id="6X5K"/>
    </source>
</evidence>
<name>DCMA_MOOTH</name>
<organism>
    <name type="scientific">Moorella thermoacetica</name>
    <name type="common">Clostridium thermoaceticum</name>
    <dbReference type="NCBI Taxonomy" id="1525"/>
    <lineage>
        <taxon>Bacteria</taxon>
        <taxon>Bacillati</taxon>
        <taxon>Bacillota</taxon>
        <taxon>Clostridia</taxon>
        <taxon>Moorellales</taxon>
        <taxon>Moorellaceae</taxon>
        <taxon>Moorella</taxon>
    </lineage>
</organism>
<keyword id="KW-0002">3D-structure</keyword>
<keyword id="KW-0004">4Fe-4S</keyword>
<keyword id="KW-0120">Carbon dioxide fixation</keyword>
<keyword id="KW-0903">Direct protein sequencing</keyword>
<keyword id="KW-0408">Iron</keyword>
<keyword id="KW-0411">Iron-sulfur</keyword>
<keyword id="KW-0479">Metal-binding</keyword>
<keyword id="KW-0533">Nickel</keyword>
<keyword id="KW-0808">Transferase</keyword>
<dbReference type="EC" id="2.3.1.169" evidence="1"/>
<dbReference type="EMBL" id="M62727">
    <property type="protein sequence ID" value="AAA23229.1"/>
    <property type="molecule type" value="Genomic_DNA"/>
</dbReference>
<dbReference type="PIR" id="B41670">
    <property type="entry name" value="B41670"/>
</dbReference>
<dbReference type="PDB" id="1MJG">
    <property type="method" value="X-ray"/>
    <property type="resolution" value="2.20 A"/>
    <property type="chains" value="M/N/O/P=1-729"/>
</dbReference>
<dbReference type="PDB" id="1OAO">
    <property type="method" value="X-ray"/>
    <property type="resolution" value="1.90 A"/>
    <property type="chains" value="C/D=1-729"/>
</dbReference>
<dbReference type="PDB" id="2Z8Y">
    <property type="method" value="X-ray"/>
    <property type="resolution" value="2.51 A"/>
    <property type="chains" value="M/N/O/P=1-729"/>
</dbReference>
<dbReference type="PDB" id="3GIT">
    <property type="method" value="X-ray"/>
    <property type="resolution" value="3.00 A"/>
    <property type="chains" value="A/B/C/D/E/F=311-729"/>
</dbReference>
<dbReference type="PDB" id="3I01">
    <property type="method" value="X-ray"/>
    <property type="resolution" value="2.15 A"/>
    <property type="chains" value="M/N/O/P=1-729"/>
</dbReference>
<dbReference type="PDB" id="3I04">
    <property type="method" value="X-ray"/>
    <property type="resolution" value="2.15 A"/>
    <property type="chains" value="M/N/O/P=2-729"/>
</dbReference>
<dbReference type="PDB" id="3S2X">
    <property type="method" value="X-ray"/>
    <property type="resolution" value="2.35 A"/>
    <property type="chains" value="A/B=594-729"/>
</dbReference>
<dbReference type="PDB" id="5GOL">
    <property type="method" value="X-ray"/>
    <property type="resolution" value="2.11 A"/>
    <property type="chains" value="A/B/C/D=594-728"/>
</dbReference>
<dbReference type="PDB" id="5H6W">
    <property type="method" value="X-ray"/>
    <property type="resolution" value="2.20 A"/>
    <property type="chains" value="A/B/C/D=594-728"/>
</dbReference>
<dbReference type="PDB" id="6X5K">
    <property type="method" value="X-ray"/>
    <property type="resolution" value="2.47 A"/>
    <property type="chains" value="M/N/O/P=1-729"/>
</dbReference>
<dbReference type="PDBsum" id="1MJG"/>
<dbReference type="PDBsum" id="1OAO"/>
<dbReference type="PDBsum" id="2Z8Y"/>
<dbReference type="PDBsum" id="3GIT"/>
<dbReference type="PDBsum" id="3I01"/>
<dbReference type="PDBsum" id="3I04"/>
<dbReference type="PDBsum" id="3S2X"/>
<dbReference type="PDBsum" id="5GOL"/>
<dbReference type="PDBsum" id="5H6W"/>
<dbReference type="PDBsum" id="6X5K"/>
<dbReference type="SMR" id="P27988"/>
<dbReference type="BioCyc" id="MetaCyc:CODHALPHACLTH-MONOMER"/>
<dbReference type="BRENDA" id="2.3.1.169">
    <property type="organism ID" value="1528"/>
</dbReference>
<dbReference type="EvolutionaryTrace" id="P27988"/>
<dbReference type="GO" id="GO:0051539">
    <property type="term" value="F:4 iron, 4 sulfur cluster binding"/>
    <property type="evidence" value="ECO:0007669"/>
    <property type="project" value="UniProtKB-KW"/>
</dbReference>
<dbReference type="GO" id="GO:0043885">
    <property type="term" value="F:anaerobic carbon-monoxide dehydrogenase activity"/>
    <property type="evidence" value="ECO:0007669"/>
    <property type="project" value="InterPro"/>
</dbReference>
<dbReference type="GO" id="GO:0043884">
    <property type="term" value="F:CO-methylating acetyl-CoA synthase activity"/>
    <property type="evidence" value="ECO:0007669"/>
    <property type="project" value="UniProtKB-EC"/>
</dbReference>
<dbReference type="GO" id="GO:0046872">
    <property type="term" value="F:metal ion binding"/>
    <property type="evidence" value="ECO:0007669"/>
    <property type="project" value="UniProtKB-KW"/>
</dbReference>
<dbReference type="GO" id="GO:0006084">
    <property type="term" value="P:acetyl-CoA metabolic process"/>
    <property type="evidence" value="ECO:0007669"/>
    <property type="project" value="InterPro"/>
</dbReference>
<dbReference type="GO" id="GO:0015977">
    <property type="term" value="P:carbon fixation"/>
    <property type="evidence" value="ECO:0007669"/>
    <property type="project" value="UniProtKB-KW"/>
</dbReference>
<dbReference type="CDD" id="cd01917">
    <property type="entry name" value="ACS_2"/>
    <property type="match status" value="1"/>
</dbReference>
<dbReference type="Gene3D" id="3.40.50.2030">
    <property type="match status" value="1"/>
</dbReference>
<dbReference type="Gene3D" id="3.30.1650.10">
    <property type="entry name" value="Bifunctional carbon monoxide dehydrogenase/acetyl-coa synthase(codh/acs), Chain M, domain 3"/>
    <property type="match status" value="1"/>
</dbReference>
<dbReference type="Gene3D" id="3.40.1470.10">
    <property type="entry name" value="Bifunctional carbon monoxide dehydrogenase/acetyl-coa synthase(codh/acs), Chain M, domain 5"/>
    <property type="match status" value="1"/>
</dbReference>
<dbReference type="Gene3D" id="3.40.970.20">
    <property type="entry name" value="Carbon monoxide dehydrogenase alpha subunit. Chain D, domain 4"/>
    <property type="match status" value="1"/>
</dbReference>
<dbReference type="Gene3D" id="1.10.8.190">
    <property type="entry name" value="Carbon monoxide dehydrogenase alpha subunit. Chain M, domain 1"/>
    <property type="match status" value="1"/>
</dbReference>
<dbReference type="InterPro" id="IPR045822">
    <property type="entry name" value="ACS_CODH_B_C"/>
</dbReference>
<dbReference type="InterPro" id="IPR004461">
    <property type="entry name" value="CO_DH/Ac-CoA_synth_bsu"/>
</dbReference>
<dbReference type="InterPro" id="IPR038571">
    <property type="entry name" value="CO_DH/Ac-CoA_synth_bsu_3_sf"/>
</dbReference>
<dbReference type="InterPro" id="IPR041350">
    <property type="entry name" value="CODH_A_N"/>
</dbReference>
<dbReference type="InterPro" id="IPR016099">
    <property type="entry name" value="Prismane-like_a/b-sand"/>
</dbReference>
<dbReference type="InterPro" id="IPR011254">
    <property type="entry name" value="Prismane-like_sf"/>
</dbReference>
<dbReference type="NCBIfam" id="TIGR00316">
    <property type="entry name" value="cdhC"/>
    <property type="match status" value="1"/>
</dbReference>
<dbReference type="NCBIfam" id="NF040764">
    <property type="entry name" value="CODH_ACS_al_bet"/>
    <property type="match status" value="1"/>
</dbReference>
<dbReference type="NCBIfam" id="NF003379">
    <property type="entry name" value="PRK04456.1"/>
    <property type="match status" value="1"/>
</dbReference>
<dbReference type="NCBIfam" id="NF007078">
    <property type="entry name" value="PRK09529.1"/>
    <property type="match status" value="1"/>
</dbReference>
<dbReference type="PANTHER" id="PTHR42281">
    <property type="match status" value="1"/>
</dbReference>
<dbReference type="PANTHER" id="PTHR42281:SF1">
    <property type="entry name" value="ACETYL-COA DECARBONYLASE_SYNTHASE COMPLEX SUBUNIT BETA 1"/>
    <property type="match status" value="1"/>
</dbReference>
<dbReference type="Pfam" id="PF19436">
    <property type="entry name" value="ACS_CODH_B_C"/>
    <property type="match status" value="1"/>
</dbReference>
<dbReference type="Pfam" id="PF03598">
    <property type="entry name" value="CdhC"/>
    <property type="match status" value="1"/>
</dbReference>
<dbReference type="Pfam" id="PF18537">
    <property type="entry name" value="CODH_A_N"/>
    <property type="match status" value="1"/>
</dbReference>
<dbReference type="SUPFAM" id="SSF56821">
    <property type="entry name" value="Prismane protein-like"/>
    <property type="match status" value="1"/>
</dbReference>
<sequence>MTDFDKIFEGAIPEGKEPVALFREVYHGAITATSYAEILLNQAIRTYGPDHPVGYPDTAYYLPVIRCFSGEEVKKLGDLPPILNRKRAQVSPVLNFENARLAGEATWYAAEIIEALRYLKYKPDEPLLPPPWTGFIGDPVVRRFGIKMVDWTIPGEAIILGRAKDSKALAKIVKELMGMGFMLFICDEAVEQLLEENVKLGIDYIAYPLGNFTQIVHAANYALRAGMMFGGVTPGAREEQRDYQRRRIRAFVLYLGEHDMVKTAAAFGAIFTGFPVITDQPLPEDKQIPDWFFSVEDYDKIVQIAMETRGIKLTKIKLDLPINFGPAFEGESIRKGDMYVEMGGNRTPAFELVRTVSESEITDGKIEVIGPDIDQIPEGSKLPLGILVDIYGRKMQADFEGVLERRIHDFINYGEGLWHTGQRNINWLRVSKDAVAKGFRFKNYGEILVAKMKEEFPAIVDRVQVTIFTDEAKVKEYMEVAREKYKERDDRMRGLTDETVDTFYSCVLCQSFAPNHVCIVTPERVGLCGAVSWLDAKASYEINHAGPNQPIPKEGEIDPIKGIWKSVNDYLYTASNRNLEQVCLYTLMENPMTSCGCFEAIMAILPECNGIMITTRDHAGMTPSGMTFSTLAGMIGGGTQTPGFMGIGRTYIVSKKFISADGGIARIVWMPKSLKDFLHDEFVRRSVEEGLGEDFIDKIADETIGTTVDEILPYLEEKGHPALTMDPIM</sequence>
<accession>P27988</accession>
<reference key="1">
    <citation type="journal article" date="1991" name="J. Biol. Chem.">
        <title>The primary structure of the subunits of carbon monoxide dehydrogenase/acetyl-CoA synthase from Clostridium thermoaceticum.</title>
        <authorList>
            <person name="Morton T.A."/>
            <person name="Runquist J.A."/>
            <person name="Ragsdale S.W."/>
            <person name="Shanmugasundaram T."/>
            <person name="Wood H.G."/>
            <person name="Ljungdahl L.G."/>
        </authorList>
    </citation>
    <scope>NUCLEOTIDE SEQUENCE [GENOMIC DNA]</scope>
</reference>
<reference key="2">
    <citation type="journal article" date="1993" name="FEBS Lett.">
        <title>Identification of a cysteine involved in the interaction between carbon monoxide dehydrogenase and corrinoid/Fe-S protein from Clostridium thermoaceticum.</title>
        <authorList>
            <person name="Shanmugasundaram T."/>
            <person name="Sundaresh C.S."/>
            <person name="Kumar G.K."/>
        </authorList>
    </citation>
    <scope>PROTEIN SEQUENCE OF 494-508</scope>
</reference>
<reference key="3">
    <citation type="journal article" date="2002" name="Science">
        <title>A Ni-Fe-Cu center in a bifunctional carbon monoxide dehydrogenase/acetyl-CoA synthase.</title>
        <authorList>
            <person name="Doukov T.I."/>
            <person name="Iverson T.M."/>
            <person name="Seravalli J."/>
            <person name="Ragsdale S.W."/>
            <person name="Drennan C.L."/>
        </authorList>
    </citation>
    <scope>X-RAY CRYSTALLOGRAPHY (2.2 ANGSTROMS)</scope>
    <scope>FUNCTION</scope>
    <scope>CATALYTIC ACTIVITY</scope>
    <scope>REACTION MECHANISM</scope>
</reference>
<reference key="4">
    <citation type="journal article" date="2003" name="Nat. Struct. Biol.">
        <title>Ni-Zn-[Fe4-S4] and Ni-Ni-[Fe4-S4] clusters in closed and open subunits of acetyl-CoA synthase/carbon monoxide dehydrogenase.</title>
        <authorList>
            <person name="Darnault C."/>
            <person name="Volbeda A."/>
            <person name="Kim E.J."/>
            <person name="Legrand P."/>
            <person name="Vernede X."/>
            <person name="Lindahl P.A."/>
            <person name="Fontecilla-Camps J.-C."/>
        </authorList>
    </citation>
    <scope>X-RAY CRYSTALLOGRAPHY (1.9 ANGSTROMS)</scope>
    <scope>REACTION MECHANISM</scope>
</reference>
<comment type="function">
    <text evidence="1">The beta subunit generates CO from CO(2), while the alpha subunit (this protein) combines the CO with CoA and a methyl group to form acetyl-CoA. The methyl group, which is incorporated into acetyl-CoA, is transferred to the alpha subunit by a corrinoid iron-sulfur protein.</text>
</comment>
<comment type="catalytic activity">
    <reaction evidence="1">
        <text>Co(I)-[corrinoid Fe-S protein] + acetyl-CoA + H(+) = methyl-Co(III)-[corrinoid Fe-S protein] + CO + CoA</text>
        <dbReference type="Rhea" id="RHEA:45212"/>
        <dbReference type="Rhea" id="RHEA-COMP:11110"/>
        <dbReference type="Rhea" id="RHEA-COMP:11111"/>
        <dbReference type="ChEBI" id="CHEBI:15378"/>
        <dbReference type="ChEBI" id="CHEBI:17245"/>
        <dbReference type="ChEBI" id="CHEBI:57287"/>
        <dbReference type="ChEBI" id="CHEBI:57288"/>
        <dbReference type="ChEBI" id="CHEBI:85033"/>
        <dbReference type="ChEBI" id="CHEBI:85035"/>
        <dbReference type="EC" id="2.3.1.169"/>
    </reaction>
</comment>
<comment type="cofactor">
    <cofactor>
        <name>Ni cation</name>
        <dbReference type="ChEBI" id="CHEBI:25516"/>
    </cofactor>
    <text>Binds 2 nickel ions per subunit.</text>
</comment>
<comment type="cofactor">
    <cofactor>
        <name>[4Fe-4S] cluster</name>
        <dbReference type="ChEBI" id="CHEBI:49883"/>
    </cofactor>
    <text>Binds 1 [4Fe-4S] cluster per subunit.</text>
</comment>
<comment type="subunit">
    <text>Tetramer of two alpha and two beta chains.</text>
</comment>
<protein>
    <recommendedName>
        <fullName>Carbon monoxide dehydrogenase/acetyl-CoA synthase subunit alpha</fullName>
        <shortName>ACS subunit</shortName>
        <shortName>Acetyl-CoA synthase subunit</shortName>
        <shortName>CODH/ACS</shortName>
        <ecNumber evidence="1">2.3.1.169</ecNumber>
    </recommendedName>
</protein>
<proteinExistence type="evidence at protein level"/>